<accession>B4F6W9</accession>
<accession>B2GUA6</accession>
<accession>F7CNG9</accession>
<accession>F7D1U0</accession>
<evidence type="ECO:0000250" key="1"/>
<evidence type="ECO:0000250" key="2">
    <source>
        <dbReference type="UniProtKB" id="Q14669"/>
    </source>
</evidence>
<evidence type="ECO:0000255" key="3">
    <source>
        <dbReference type="PROSITE-ProRule" id="PRU00104"/>
    </source>
</evidence>
<evidence type="ECO:0000255" key="4">
    <source>
        <dbReference type="PROSITE-ProRule" id="PRU00248"/>
    </source>
</evidence>
<evidence type="ECO:0000256" key="5">
    <source>
        <dbReference type="SAM" id="MobiDB-lite"/>
    </source>
</evidence>
<evidence type="ECO:0000303" key="6">
    <source ref="2"/>
</evidence>
<evidence type="ECO:0000305" key="7"/>
<reference key="1">
    <citation type="journal article" date="2010" name="Science">
        <title>The genome of the Western clawed frog Xenopus tropicalis.</title>
        <authorList>
            <person name="Hellsten U."/>
            <person name="Harland R.M."/>
            <person name="Gilchrist M.J."/>
            <person name="Hendrix D."/>
            <person name="Jurka J."/>
            <person name="Kapitonov V."/>
            <person name="Ovcharenko I."/>
            <person name="Putnam N.H."/>
            <person name="Shu S."/>
            <person name="Taher L."/>
            <person name="Blitz I.L."/>
            <person name="Blumberg B."/>
            <person name="Dichmann D.S."/>
            <person name="Dubchak I."/>
            <person name="Amaya E."/>
            <person name="Detter J.C."/>
            <person name="Fletcher R."/>
            <person name="Gerhard D.S."/>
            <person name="Goodstein D."/>
            <person name="Graves T."/>
            <person name="Grigoriev I.V."/>
            <person name="Grimwood J."/>
            <person name="Kawashima T."/>
            <person name="Lindquist E."/>
            <person name="Lucas S.M."/>
            <person name="Mead P.E."/>
            <person name="Mitros T."/>
            <person name="Ogino H."/>
            <person name="Ohta Y."/>
            <person name="Poliakov A.V."/>
            <person name="Pollet N."/>
            <person name="Robert J."/>
            <person name="Salamov A."/>
            <person name="Sater A.K."/>
            <person name="Schmutz J."/>
            <person name="Terry A."/>
            <person name="Vize P.D."/>
            <person name="Warren W.C."/>
            <person name="Wells D."/>
            <person name="Wills A."/>
            <person name="Wilson R.K."/>
            <person name="Zimmerman L.B."/>
            <person name="Zorn A.M."/>
            <person name="Grainger R."/>
            <person name="Grammer T."/>
            <person name="Khokha M.K."/>
            <person name="Richardson P.M."/>
            <person name="Rokhsar D.S."/>
        </authorList>
    </citation>
    <scope>NUCLEOTIDE SEQUENCE [LARGE SCALE GENOMIC DNA]</scope>
</reference>
<reference key="2">
    <citation type="submission" date="2008-07" db="EMBL/GenBank/DDBJ databases">
        <authorList>
            <consortium name="NIH - Xenopus Gene Collection (XGC) project"/>
        </authorList>
    </citation>
    <scope>NUCLEOTIDE SEQUENCE [LARGE SCALE MRNA] (ISOFORM 1)</scope>
    <scope>NUCLEOTIDE SEQUENCE [LARGE SCALE MRNA] OF 1-1151 (ISOFORM 2)</scope>
    <source>
        <tissue>Testis</tissue>
    </source>
</reference>
<proteinExistence type="evidence at transcript level"/>
<keyword id="KW-0025">Alternative splicing</keyword>
<keyword id="KW-0227">DNA damage</keyword>
<keyword id="KW-0234">DNA repair</keyword>
<keyword id="KW-0539">Nucleus</keyword>
<keyword id="KW-0597">Phosphoprotein</keyword>
<keyword id="KW-1185">Reference proteome</keyword>
<keyword id="KW-0808">Transferase</keyword>
<keyword id="KW-0833">Ubl conjugation pathway</keyword>
<sequence length="2056" mass="227673">MSSRPNNNPGGSLRRSQRNTAGAQPQEDTAGGRSNLEQAENKTHSLPESRKSHFKTPKVQSNTTSGPSKGHSSKRGCSSSNLLPNPEDTERINTTDTQRPKKDHVRGVKRSASPDHSRTNSPSSAKKPKALQHPEPSSGPRRPNNKPKKRQGSQEQPFPSASLPSTSKAHSRKGGSQGTSPLPKRKRTELSPCVKSSSAAVISTGAEDRPPKLSKLASKSATSAKAGCSNITDSSSSASTSSSSSAVASVSAAPPGARVKQGKDQNKARRSRSASSPSPRRSSREKEQTKTSSSSKFDWAARFSPKVSLPKTKLSLPGSSKTETSKPGPSGLQAKLANLRKSTKKRSESPPAELPSLRRSTRQKTTGSCASTSRRGSGLGKRAAAEARRQEKMADPDNQEGANSSAARTDETAQGAAASSSVAGAVGMTTSGESESDDSEMGRLQALLEARGLPPHLFGPLGPRMSQLFHRTIGSGASSKAQQLLQGLQATDESQQLQAVIEMCQLLVMGNEETLGGFPVKSVVPALITLLQMEHNFDIMNHACRALTYMMEALPRSSAVVVDAIPVFLEKLQVIQCIDVAEQALTALEMLSRRHSKAILQAGGLADCLLYLEFFSINAQRNALAIAANCCQSISPDEFHFVADSLPLLTQRLTHQDKKSVESTCLCFARLVDNFQHEENLLQQVASRDLLTNIQQLLVVTPPILSSGMFIMVVRMFSLMCSNCPTLAVQLMKQNIAETLHFLLCGASNGSCLEQIDLVPRSPQELYELTSLICELMPCLPKEGIFAVDTMLKKGNAQNTDGAIWQWRDDRGLWHPYSRIDSRIIEAAHQVGEDEISLSTLGRVYTIDFNSMQQINEDTGTARAIQRKPNPVANANTTGHSELKRDDARAQLMKEDPELAKSFIKTLFGVLYEVYSSSAGPAVRHKCLRAILRIIYFADAELLKDVLKNHAVSSHIASMLSSQDLKIVVGALQMAEILMQKLPDIFSVYFRREGVMHQVKNLAESEALLTSPPKVCTNGSGSLASTTTISTGSGTASGNSAADLGSPSLQHRDDSLDLSPPGRLSDVLKRKRLPKRGPRRPKYSPPRDEDKVDNQAKSPTTTQSPKSFLASLNPKTWGRLSTQSNSNNIEPARTAGVSGLARAASKDTISNNRERIRGWIKEQAHKFVERYFSSENMDGSNPALNVLQRLCNATEQLNLQVDGGVECLVEIRSIVSESDVSSFEIQHSGFVKQLLLYLTSKSDKDIVSRDIRLKRFLHVFFGTPLPGEEPLAKLDPTENRHLLALVHKMNNCLSQMEQFPVKVHDFPSGNGTGSRGSQALKFFNTHQLKCQLQRHPDCTNVKQWKGGPVKIDPLALVQAIERYLVVRGYGRVREDDEDSDDDGSDEEIDESLAAQFLNSGNVRHRLQFYIGDHLLPYNMTVYQAVRQYSIQTEEERESTDDESNPLGRAGIWTKTHTIWYKPVREEEESAKDTVGGKRGRAQTAPTKTSPRNSKKHDELWHGKDGVCPRILNPLEVYLISGPPENITFDDPSLDVVILLRVLHAISRYWYYLYDNAVCKEIIPTSEFNNSKLTAKANRQLQDPLVIMTGNIPTWLTELGKSCPFFFPFDTRQMLFYVTAFDRDRAMQRLLDTNPEINQSDSQDSRVAPRLDRKKRTVNREDLLKQAESVMQDLGSSRAMLEIQYENEVGTGLGPTLEFYALVSQELQRADLGLWRGEEVTLPNPKGSQEGTKYIHNLQGLFALPFGRTAKPAHIAKVKMKFRFLGKLMAKAIMDFRLVDIPLGLPFYKWMLRQESSLATHDLVNIDPVVAKSVYHLEDIVRQKKRLEQDKAQTKESLQFALESLNMNGCSVEDLGLDFTLPGFPNIELKKGGKDVPVTIHNLEDYVRLVIYWALNEGVSRQLDSFRDGFESVFPLNHLQYFYPEELDQLLCGSRADPWDVKTLMECCRPDHGYTHDSRAVKFLFEILSSFDKEQQRLFLQFVTGSPRLPVGGFRSLNPPLTIVRKTFEATENPDDFLPSVMTCVNYLKLPDYSSIDNMREKLLMAAREGQQSFHLS</sequence>
<name>TRIPC_XENTR</name>
<gene>
    <name type="primary">trip12</name>
</gene>
<comment type="function">
    <text evidence="2">E3 ubiquitin-protein ligase involved in ubiquitin fusion degradation (UFD) pathway and regulation of DNA repair. Part of the ubiquitin fusion degradation (UFD) pathway, a process that mediates ubiquitination of protein at their N-terminus, regardless of the presence of lysine residues in target proteins. Acts as a key regulator of DNA damage response by acting as a suppressor of RNF168, an E3 ubiquitin-protein ligase that promotes accumulation of 'Lys-63'-linked histone H2A and H2AX at DNA damage sites, thereby acting as a guard against excessive spreading of ubiquitinated chromatin at damaged chromosomes.</text>
</comment>
<comment type="catalytic activity">
    <reaction evidence="2">
        <text>S-ubiquitinyl-[E2 ubiquitin-conjugating enzyme]-L-cysteine + [acceptor protein]-L-lysine = [E2 ubiquitin-conjugating enzyme]-L-cysteine + N(6)-ubiquitinyl-[acceptor protein]-L-lysine.</text>
        <dbReference type="EC" id="2.3.2.26"/>
    </reaction>
</comment>
<comment type="pathway">
    <text evidence="2">Protein modification; protein ubiquitination.</text>
</comment>
<comment type="subcellular location">
    <subcellularLocation>
        <location evidence="2">Nucleus</location>
        <location evidence="2">Nucleoplasm</location>
    </subcellularLocation>
</comment>
<comment type="alternative products">
    <event type="alternative splicing"/>
    <isoform>
        <id>B4F6W9-1</id>
        <name>1</name>
        <sequence type="displayed"/>
    </isoform>
    <isoform>
        <id>B4F6W9-2</id>
        <name>2</name>
        <sequence type="described" ref="VSP_044333"/>
    </isoform>
</comment>
<comment type="similarity">
    <text evidence="7">Belongs to the UPL family. K-HECT subfamily.</text>
</comment>
<comment type="sequence caution" evidence="7">
    <conflict type="miscellaneous discrepancy">
        <sequence resource="EMBL-CDS" id="AAI66201"/>
    </conflict>
    <text>Contaminating sequence. Potential poly-A sequence.</text>
</comment>
<organism>
    <name type="scientific">Xenopus tropicalis</name>
    <name type="common">Western clawed frog</name>
    <name type="synonym">Silurana tropicalis</name>
    <dbReference type="NCBI Taxonomy" id="8364"/>
    <lineage>
        <taxon>Eukaryota</taxon>
        <taxon>Metazoa</taxon>
        <taxon>Chordata</taxon>
        <taxon>Craniata</taxon>
        <taxon>Vertebrata</taxon>
        <taxon>Euteleostomi</taxon>
        <taxon>Amphibia</taxon>
        <taxon>Batrachia</taxon>
        <taxon>Anura</taxon>
        <taxon>Pipoidea</taxon>
        <taxon>Pipidae</taxon>
        <taxon>Xenopodinae</taxon>
        <taxon>Xenopus</taxon>
        <taxon>Silurana</taxon>
    </lineage>
</organism>
<feature type="chain" id="PRO_0000419692" description="E3 ubiquitin-protein ligase TRIP12">
    <location>
        <begin position="1"/>
        <end position="2056"/>
    </location>
</feature>
<feature type="domain" description="WWE" evidence="4">
    <location>
        <begin position="791"/>
        <end position="905"/>
    </location>
</feature>
<feature type="domain" description="HECT" evidence="3">
    <location>
        <begin position="1949"/>
        <end position="2056"/>
    </location>
</feature>
<feature type="region of interest" description="Disordered" evidence="5">
    <location>
        <begin position="1"/>
        <end position="440"/>
    </location>
</feature>
<feature type="region of interest" description="Disordered" evidence="5">
    <location>
        <begin position="1027"/>
        <end position="1147"/>
    </location>
</feature>
<feature type="region of interest" description="Disordered" evidence="5">
    <location>
        <begin position="1465"/>
        <end position="1500"/>
    </location>
</feature>
<feature type="region of interest" description="K-box" evidence="1">
    <location>
        <begin position="1560"/>
        <end position="1634"/>
    </location>
</feature>
<feature type="region of interest" description="Disordered" evidence="5">
    <location>
        <begin position="1632"/>
        <end position="1651"/>
    </location>
</feature>
<feature type="compositionally biased region" description="Polar residues" evidence="5">
    <location>
        <begin position="1"/>
        <end position="10"/>
    </location>
</feature>
<feature type="compositionally biased region" description="Polar residues" evidence="5">
    <location>
        <begin position="18"/>
        <end position="27"/>
    </location>
</feature>
<feature type="compositionally biased region" description="Basic and acidic residues" evidence="5">
    <location>
        <begin position="39"/>
        <end position="51"/>
    </location>
</feature>
<feature type="compositionally biased region" description="Polar residues" evidence="5">
    <location>
        <begin position="58"/>
        <end position="67"/>
    </location>
</feature>
<feature type="compositionally biased region" description="Polar residues" evidence="5">
    <location>
        <begin position="153"/>
        <end position="168"/>
    </location>
</feature>
<feature type="compositionally biased region" description="Low complexity" evidence="5">
    <location>
        <begin position="213"/>
        <end position="226"/>
    </location>
</feature>
<feature type="compositionally biased region" description="Low complexity" evidence="5">
    <location>
        <begin position="234"/>
        <end position="253"/>
    </location>
</feature>
<feature type="compositionally biased region" description="Polar residues" evidence="5">
    <location>
        <begin position="317"/>
        <end position="327"/>
    </location>
</feature>
<feature type="compositionally biased region" description="Polar residues" evidence="5">
    <location>
        <begin position="363"/>
        <end position="375"/>
    </location>
</feature>
<feature type="compositionally biased region" description="Basic and acidic residues" evidence="5">
    <location>
        <begin position="383"/>
        <end position="395"/>
    </location>
</feature>
<feature type="compositionally biased region" description="Low complexity" evidence="5">
    <location>
        <begin position="415"/>
        <end position="433"/>
    </location>
</feature>
<feature type="compositionally biased region" description="Low complexity" evidence="5">
    <location>
        <begin position="1027"/>
        <end position="1042"/>
    </location>
</feature>
<feature type="compositionally biased region" description="Basic residues" evidence="5">
    <location>
        <begin position="1069"/>
        <end position="1082"/>
    </location>
</feature>
<feature type="compositionally biased region" description="Basic and acidic residues" evidence="5">
    <location>
        <begin position="1085"/>
        <end position="1094"/>
    </location>
</feature>
<feature type="compositionally biased region" description="Polar residues" evidence="5">
    <location>
        <begin position="1095"/>
        <end position="1106"/>
    </location>
</feature>
<feature type="compositionally biased region" description="Polar residues" evidence="5">
    <location>
        <begin position="1119"/>
        <end position="1129"/>
    </location>
</feature>
<feature type="active site" description="Glycyl thioester intermediate" evidence="3">
    <location>
        <position position="2023"/>
    </location>
</feature>
<feature type="splice variant" id="VSP_044333" description="In isoform 2." evidence="6">
    <location>
        <begin position="33"/>
        <end position="74"/>
    </location>
</feature>
<dbReference type="EC" id="2.3.2.26"/>
<dbReference type="EMBL" id="AAMC01022090">
    <property type="status" value="NOT_ANNOTATED_CDS"/>
    <property type="molecule type" value="Genomic_DNA"/>
</dbReference>
<dbReference type="EMBL" id="AAMC01022091">
    <property type="status" value="NOT_ANNOTATED_CDS"/>
    <property type="molecule type" value="Genomic_DNA"/>
</dbReference>
<dbReference type="EMBL" id="AAMC01022092">
    <property type="status" value="NOT_ANNOTATED_CDS"/>
    <property type="molecule type" value="Genomic_DNA"/>
</dbReference>
<dbReference type="EMBL" id="AAMC01022093">
    <property type="status" value="NOT_ANNOTATED_CDS"/>
    <property type="molecule type" value="Genomic_DNA"/>
</dbReference>
<dbReference type="EMBL" id="AAMC01022094">
    <property type="status" value="NOT_ANNOTATED_CDS"/>
    <property type="molecule type" value="Genomic_DNA"/>
</dbReference>
<dbReference type="EMBL" id="AAMC01022095">
    <property type="status" value="NOT_ANNOTATED_CDS"/>
    <property type="molecule type" value="Genomic_DNA"/>
</dbReference>
<dbReference type="EMBL" id="AAMC01022096">
    <property type="status" value="NOT_ANNOTATED_CDS"/>
    <property type="molecule type" value="Genomic_DNA"/>
</dbReference>
<dbReference type="EMBL" id="BC168042">
    <property type="protein sequence ID" value="AAI68042.1"/>
    <property type="molecule type" value="mRNA"/>
</dbReference>
<dbReference type="EMBL" id="BC166201">
    <property type="protein sequence ID" value="AAI66201.1"/>
    <property type="status" value="ALT_SEQ"/>
    <property type="molecule type" value="mRNA"/>
</dbReference>
<dbReference type="RefSeq" id="NP_001136384.1">
    <molecule id="B4F6W9-1"/>
    <property type="nucleotide sequence ID" value="NM_001142912.1"/>
</dbReference>
<dbReference type="RefSeq" id="XP_012825572.1">
    <molecule id="B4F6W9-1"/>
    <property type="nucleotide sequence ID" value="XM_012970118.3"/>
</dbReference>
<dbReference type="RefSeq" id="XP_012825576.1">
    <molecule id="B4F6W9-2"/>
    <property type="nucleotide sequence ID" value="XM_012970122.3"/>
</dbReference>
<dbReference type="RefSeq" id="XP_031757408.1">
    <molecule id="B4F6W9-1"/>
    <property type="nucleotide sequence ID" value="XM_031901548.1"/>
</dbReference>
<dbReference type="SMR" id="B4F6W9"/>
<dbReference type="FunCoup" id="B4F6W9">
    <property type="interactions" value="4550"/>
</dbReference>
<dbReference type="STRING" id="8364.ENSXETP00000003237"/>
<dbReference type="PaxDb" id="8364-ENSXETP00000063204"/>
<dbReference type="GeneID" id="100158539"/>
<dbReference type="KEGG" id="xtr:100158539"/>
<dbReference type="AGR" id="Xenbase:XB-GENE-6071044"/>
<dbReference type="CTD" id="9320"/>
<dbReference type="Xenbase" id="XB-GENE-6071044">
    <property type="gene designation" value="trip12"/>
</dbReference>
<dbReference type="eggNOG" id="KOG0168">
    <property type="taxonomic scope" value="Eukaryota"/>
</dbReference>
<dbReference type="eggNOG" id="KOG0170">
    <property type="taxonomic scope" value="Eukaryota"/>
</dbReference>
<dbReference type="InParanoid" id="B4F6W9"/>
<dbReference type="OMA" id="AEPLSQF"/>
<dbReference type="OrthoDB" id="271273at2759"/>
<dbReference type="UniPathway" id="UPA00143"/>
<dbReference type="Proteomes" id="UP000008143">
    <property type="component" value="Chromosome 5"/>
</dbReference>
<dbReference type="Bgee" id="ENSXETG00000014757">
    <property type="expression patterns" value="Expressed in blastula and 14 other cell types or tissues"/>
</dbReference>
<dbReference type="ExpressionAtlas" id="B4F6W9">
    <property type="expression patterns" value="baseline"/>
</dbReference>
<dbReference type="GO" id="GO:0005654">
    <property type="term" value="C:nucleoplasm"/>
    <property type="evidence" value="ECO:0000250"/>
    <property type="project" value="UniProtKB"/>
</dbReference>
<dbReference type="GO" id="GO:0061630">
    <property type="term" value="F:ubiquitin protein ligase activity"/>
    <property type="evidence" value="ECO:0000250"/>
    <property type="project" value="UniProtKB"/>
</dbReference>
<dbReference type="GO" id="GO:0008270">
    <property type="term" value="F:zinc ion binding"/>
    <property type="evidence" value="ECO:0007669"/>
    <property type="project" value="InterPro"/>
</dbReference>
<dbReference type="GO" id="GO:0006281">
    <property type="term" value="P:DNA repair"/>
    <property type="evidence" value="ECO:0007669"/>
    <property type="project" value="UniProtKB-KW"/>
</dbReference>
<dbReference type="GO" id="GO:0140861">
    <property type="term" value="P:DNA repair-dependent chromatin remodeling"/>
    <property type="evidence" value="ECO:0000250"/>
    <property type="project" value="UniProtKB"/>
</dbReference>
<dbReference type="GO" id="GO:0033696">
    <property type="term" value="P:heterochromatin boundary formation"/>
    <property type="evidence" value="ECO:0000250"/>
    <property type="project" value="UniProtKB"/>
</dbReference>
<dbReference type="GO" id="GO:0000209">
    <property type="term" value="P:protein polyubiquitination"/>
    <property type="evidence" value="ECO:0000250"/>
    <property type="project" value="UniProtKB"/>
</dbReference>
<dbReference type="GO" id="GO:0045995">
    <property type="term" value="P:regulation of embryonic development"/>
    <property type="evidence" value="ECO:0000250"/>
    <property type="project" value="UniProtKB"/>
</dbReference>
<dbReference type="GO" id="GO:0006511">
    <property type="term" value="P:ubiquitin-dependent protein catabolic process"/>
    <property type="evidence" value="ECO:0000250"/>
    <property type="project" value="UniProtKB"/>
</dbReference>
<dbReference type="CDD" id="cd00078">
    <property type="entry name" value="HECTc"/>
    <property type="match status" value="1"/>
</dbReference>
<dbReference type="FunFam" id="3.30.2410.10:FF:000005">
    <property type="entry name" value="E3 ubiquitin-protein ligase TRIP12 isoform X1"/>
    <property type="match status" value="1"/>
</dbReference>
<dbReference type="FunFam" id="3.30.720.50:FF:000001">
    <property type="entry name" value="E3 ubiquitin-protein ligase TRIP12 isoform X1"/>
    <property type="match status" value="1"/>
</dbReference>
<dbReference type="FunFam" id="3.90.1750.10:FF:000006">
    <property type="entry name" value="E3 ubiquitin-protein ligase TRIP12 isoform X1"/>
    <property type="match status" value="1"/>
</dbReference>
<dbReference type="FunFam" id="1.25.10.10:FF:000018">
    <property type="entry name" value="E3 ubiquitin-protein ligase TRIP12 isoform X3"/>
    <property type="match status" value="1"/>
</dbReference>
<dbReference type="Gene3D" id="3.30.720.50">
    <property type="match status" value="1"/>
</dbReference>
<dbReference type="Gene3D" id="3.30.2410.10">
    <property type="entry name" value="Hect, E3 ligase catalytic domain"/>
    <property type="match status" value="1"/>
</dbReference>
<dbReference type="Gene3D" id="3.90.1750.10">
    <property type="entry name" value="Hect, E3 ligase catalytic domains"/>
    <property type="match status" value="1"/>
</dbReference>
<dbReference type="Gene3D" id="1.25.10.10">
    <property type="entry name" value="Leucine-rich Repeat Variant"/>
    <property type="match status" value="1"/>
</dbReference>
<dbReference type="InterPro" id="IPR011989">
    <property type="entry name" value="ARM-like"/>
</dbReference>
<dbReference type="InterPro" id="IPR016024">
    <property type="entry name" value="ARM-type_fold"/>
</dbReference>
<dbReference type="InterPro" id="IPR000569">
    <property type="entry name" value="HECT_dom"/>
</dbReference>
<dbReference type="InterPro" id="IPR035983">
    <property type="entry name" value="Hect_E3_ubiquitin_ligase"/>
</dbReference>
<dbReference type="InterPro" id="IPR045322">
    <property type="entry name" value="HECTD1/TRIP12-like"/>
</dbReference>
<dbReference type="InterPro" id="IPR018123">
    <property type="entry name" value="WWE-dom_subgr"/>
</dbReference>
<dbReference type="InterPro" id="IPR004170">
    <property type="entry name" value="WWE_dom"/>
</dbReference>
<dbReference type="InterPro" id="IPR037197">
    <property type="entry name" value="WWE_dom_sf"/>
</dbReference>
<dbReference type="PANTHER" id="PTHR45670">
    <property type="entry name" value="E3 UBIQUITIN-PROTEIN LIGASE TRIP12"/>
    <property type="match status" value="1"/>
</dbReference>
<dbReference type="PANTHER" id="PTHR45670:SF13">
    <property type="entry name" value="E3 UBIQUITIN-PROTEIN LIGASE TRIP12"/>
    <property type="match status" value="1"/>
</dbReference>
<dbReference type="Pfam" id="PF00632">
    <property type="entry name" value="HECT"/>
    <property type="match status" value="1"/>
</dbReference>
<dbReference type="Pfam" id="PF02825">
    <property type="entry name" value="WWE"/>
    <property type="match status" value="1"/>
</dbReference>
<dbReference type="SMART" id="SM00119">
    <property type="entry name" value="HECTc"/>
    <property type="match status" value="1"/>
</dbReference>
<dbReference type="SMART" id="SM00678">
    <property type="entry name" value="WWE"/>
    <property type="match status" value="1"/>
</dbReference>
<dbReference type="SUPFAM" id="SSF48371">
    <property type="entry name" value="ARM repeat"/>
    <property type="match status" value="1"/>
</dbReference>
<dbReference type="SUPFAM" id="SSF56204">
    <property type="entry name" value="Hect, E3 ligase catalytic domain"/>
    <property type="match status" value="1"/>
</dbReference>
<dbReference type="SUPFAM" id="SSF117839">
    <property type="entry name" value="WWE domain"/>
    <property type="match status" value="1"/>
</dbReference>
<dbReference type="PROSITE" id="PS50237">
    <property type="entry name" value="HECT"/>
    <property type="match status" value="1"/>
</dbReference>
<dbReference type="PROSITE" id="PS50918">
    <property type="entry name" value="WWE"/>
    <property type="match status" value="1"/>
</dbReference>
<protein>
    <recommendedName>
        <fullName>E3 ubiquitin-protein ligase TRIP12</fullName>
        <ecNumber>2.3.2.26</ecNumber>
    </recommendedName>
    <alternativeName>
        <fullName>HECT-type E3 ubiquitin transferase TRIP12</fullName>
    </alternativeName>
    <alternativeName>
        <fullName>Thyroid receptor-interacting protein 12</fullName>
        <shortName>TR-interacting protein 12</shortName>
        <shortName>TRIP-12</shortName>
    </alternativeName>
</protein>